<comment type="function">
    <text evidence="1">Transcriptional activator. Seems to be essential for sexual differentiation and formation of the primary steroidogenic tissues. Binds to the Ad4 site found in the promoter region of steroidogenic P450 genes such as CYP11A, CYP11B and CYP21B. Also regulates the AMH/Muellerian inhibiting substance gene as well as the AHCH and STAR genes. 5'-YCAAGGYC-3' and 5'-RRAGGTCA-3' are the consensus sequences for the recognition by NR5A1. The SFPQ-NONO-NR5A1 complex binds to the CYP17 promoter and regulates basal and cAMP-dependent transcriptional activity. Binds phosphatidylcholine and phospholipids with a phosphatidylinositol (PI) headgroup, in particular PI(3,4)P2 and PI(3,4,5)P3. Activated by the phosphorylation of NR5A1 by HIPK3 leading to increased steroidogenic gene expression upon cAMP signaling pathway stimulation (By similarity).</text>
</comment>
<comment type="subunit">
    <text evidence="1">Binds DNA as a monomer (By similarity). Part of a complex consisting of SFPQ, NONO and NR5A1. Interacts with NR0B2, NCOA2 and PPARGC1A. Interacts with DGKQ and CDK7. Binds to and activated by HIPK3 (By similarity).</text>
</comment>
<comment type="subcellular location">
    <subcellularLocation>
        <location evidence="4">Nucleus</location>
    </subcellularLocation>
</comment>
<comment type="tissue specificity">
    <text evidence="7">Expressed in the pre-granulosa and Sertoli cells of the ovary and testis, respectively. In the testis it is also present in the interstitial cells. In the adult ovary it is expressed in the interstitial gland, and in the granulosa cells and theca interna of small to medium-sized antral follicles, but is not expressed in large antral follicles.</text>
</comment>
<comment type="developmental stage">
    <text evidence="7">Expressed by both ovaries and testes on the day of birth, just prior to the onset of testicular differentiation, until at least 8 days after birth by which time the ovary also has begun to sexually differentiate.</text>
</comment>
<comment type="PTM">
    <text evidence="1">Acetylation stimulates the transcriptional activity.</text>
</comment>
<comment type="PTM">
    <text evidence="1">Sumoylation reduces CDK7-mediated phosphorylation on Ser-202.</text>
</comment>
<comment type="PTM">
    <text evidence="1">Phosphorylated on Ser-202 by CDK7. This phosphorylation promotes transcriptional activity (By similarity).</text>
</comment>
<comment type="similarity">
    <text evidence="8">Belongs to the nuclear hormone receptor family. NR5 subfamily.</text>
</comment>
<feature type="chain" id="PRO_0000053731" description="Steroidogenic factor 1">
    <location>
        <begin position="1"/>
        <end position="463"/>
    </location>
</feature>
<feature type="domain" description="NR LBD" evidence="5">
    <location>
        <begin position="224"/>
        <end position="461"/>
    </location>
</feature>
<feature type="DNA-binding region" description="Nuclear receptor" evidence="4">
    <location>
        <begin position="10"/>
        <end position="85"/>
    </location>
</feature>
<feature type="zinc finger region" description="NR C4-type" evidence="4">
    <location>
        <begin position="13"/>
        <end position="33"/>
    </location>
</feature>
<feature type="zinc finger region" description="NR C4-type" evidence="4">
    <location>
        <begin position="49"/>
        <end position="73"/>
    </location>
</feature>
<feature type="region of interest" description="Disordered" evidence="6">
    <location>
        <begin position="119"/>
        <end position="160"/>
    </location>
</feature>
<feature type="region of interest" description="Disordered" evidence="6">
    <location>
        <begin position="197"/>
        <end position="216"/>
    </location>
</feature>
<feature type="compositionally biased region" description="Low complexity" evidence="6">
    <location>
        <begin position="135"/>
        <end position="148"/>
    </location>
</feature>
<feature type="compositionally biased region" description="Pro residues" evidence="6">
    <location>
        <begin position="205"/>
        <end position="216"/>
    </location>
</feature>
<feature type="binding site" evidence="2">
    <location>
        <position position="343"/>
    </location>
    <ligand>
        <name>a 1,2-diacyl-sn-glycero-3-phosphocholine</name>
        <dbReference type="ChEBI" id="CHEBI:57643"/>
    </ligand>
</feature>
<feature type="binding site" evidence="2">
    <location>
        <position position="438"/>
    </location>
    <ligand>
        <name>a 1,2-diacyl-sn-glycero-3-phosphocholine</name>
        <dbReference type="ChEBI" id="CHEBI:57643"/>
    </ligand>
</feature>
<feature type="binding site" evidence="2">
    <location>
        <position position="442"/>
    </location>
    <ligand>
        <name>a 1,2-diacyl-sn-glycero-3-phosphocholine</name>
        <dbReference type="ChEBI" id="CHEBI:57643"/>
    </ligand>
</feature>
<feature type="modified residue" description="N6-acetyllysine" evidence="3">
    <location>
        <position position="34"/>
    </location>
</feature>
<feature type="modified residue" description="N6-acetyllysine" evidence="3">
    <location>
        <position position="38"/>
    </location>
</feature>
<feature type="modified residue" description="N6-acetyllysine" evidence="3">
    <location>
        <position position="72"/>
    </location>
</feature>
<feature type="modified residue" description="Phosphoserine; by CDK7" evidence="3">
    <location>
        <position position="202"/>
    </location>
</feature>
<feature type="cross-link" description="Glycyl lysine isopeptide (Lys-Gly) (interchain with G-Cter in SUMO)" evidence="1">
    <location>
        <position position="119"/>
    </location>
</feature>
<feature type="cross-link" description="Glycyl lysine isopeptide (Lys-Gly) (interchain with G-Cter in SUMO)" evidence="1">
    <location>
        <position position="193"/>
    </location>
</feature>
<dbReference type="EMBL" id="AF401742">
    <property type="protein sequence ID" value="AAK94918.1"/>
    <property type="molecule type" value="mRNA"/>
</dbReference>
<dbReference type="SMR" id="Q95L87"/>
<dbReference type="GO" id="GO:0090575">
    <property type="term" value="C:RNA polymerase II transcription regulator complex"/>
    <property type="evidence" value="ECO:0007669"/>
    <property type="project" value="TreeGrafter"/>
</dbReference>
<dbReference type="GO" id="GO:0008289">
    <property type="term" value="F:lipid binding"/>
    <property type="evidence" value="ECO:0007669"/>
    <property type="project" value="UniProtKB-KW"/>
</dbReference>
<dbReference type="GO" id="GO:0004879">
    <property type="term" value="F:nuclear receptor activity"/>
    <property type="evidence" value="ECO:0007669"/>
    <property type="project" value="InterPro"/>
</dbReference>
<dbReference type="GO" id="GO:0000978">
    <property type="term" value="F:RNA polymerase II cis-regulatory region sequence-specific DNA binding"/>
    <property type="evidence" value="ECO:0007669"/>
    <property type="project" value="TreeGrafter"/>
</dbReference>
<dbReference type="GO" id="GO:0008270">
    <property type="term" value="F:zinc ion binding"/>
    <property type="evidence" value="ECO:0007669"/>
    <property type="project" value="UniProtKB-KW"/>
</dbReference>
<dbReference type="GO" id="GO:0008585">
    <property type="term" value="P:female gonad development"/>
    <property type="evidence" value="ECO:0000250"/>
    <property type="project" value="UniProtKB"/>
</dbReference>
<dbReference type="GO" id="GO:0009755">
    <property type="term" value="P:hormone-mediated signaling pathway"/>
    <property type="evidence" value="ECO:0007669"/>
    <property type="project" value="TreeGrafter"/>
</dbReference>
<dbReference type="GO" id="GO:0008584">
    <property type="term" value="P:male gonad development"/>
    <property type="evidence" value="ECO:0000250"/>
    <property type="project" value="UniProtKB"/>
</dbReference>
<dbReference type="GO" id="GO:0010628">
    <property type="term" value="P:positive regulation of gene expression"/>
    <property type="evidence" value="ECO:0000250"/>
    <property type="project" value="UniProtKB"/>
</dbReference>
<dbReference type="GO" id="GO:0007530">
    <property type="term" value="P:sex determination"/>
    <property type="evidence" value="ECO:0000250"/>
    <property type="project" value="UniProtKB"/>
</dbReference>
<dbReference type="GO" id="GO:0009888">
    <property type="term" value="P:tissue development"/>
    <property type="evidence" value="ECO:0007669"/>
    <property type="project" value="TreeGrafter"/>
</dbReference>
<dbReference type="CDD" id="cd07167">
    <property type="entry name" value="NR_DBD_Lrh-1_like"/>
    <property type="match status" value="1"/>
</dbReference>
<dbReference type="CDD" id="cd07070">
    <property type="entry name" value="NR_LBD_SF-1"/>
    <property type="match status" value="1"/>
</dbReference>
<dbReference type="FunFam" id="3.30.50.10:FF:000006">
    <property type="entry name" value="Nuclear receptor subfamily 5 group A member"/>
    <property type="match status" value="1"/>
</dbReference>
<dbReference type="FunFam" id="1.10.565.10:FF:000011">
    <property type="entry name" value="Nuclear receptor subfamily 5, group A, member 2"/>
    <property type="match status" value="1"/>
</dbReference>
<dbReference type="Gene3D" id="3.30.50.10">
    <property type="entry name" value="Erythroid Transcription Factor GATA-1, subunit A"/>
    <property type="match status" value="1"/>
</dbReference>
<dbReference type="Gene3D" id="1.10.565.10">
    <property type="entry name" value="Retinoid X Receptor"/>
    <property type="match status" value="1"/>
</dbReference>
<dbReference type="InterPro" id="IPR035500">
    <property type="entry name" value="NHR-like_dom_sf"/>
</dbReference>
<dbReference type="InterPro" id="IPR016355">
    <property type="entry name" value="NR5-like"/>
</dbReference>
<dbReference type="InterPro" id="IPR000536">
    <property type="entry name" value="Nucl_hrmn_rcpt_lig-bd"/>
</dbReference>
<dbReference type="InterPro" id="IPR001723">
    <property type="entry name" value="Nuclear_hrmn_rcpt"/>
</dbReference>
<dbReference type="InterPro" id="IPR001628">
    <property type="entry name" value="Znf_hrmn_rcpt"/>
</dbReference>
<dbReference type="InterPro" id="IPR013088">
    <property type="entry name" value="Znf_NHR/GATA"/>
</dbReference>
<dbReference type="PANTHER" id="PTHR24086">
    <property type="entry name" value="NUCLEAR RECEPTOR SUBFAMILY 5 GROUP A"/>
    <property type="match status" value="1"/>
</dbReference>
<dbReference type="PANTHER" id="PTHR24086:SF24">
    <property type="entry name" value="STEROIDOGENIC FACTOR 1"/>
    <property type="match status" value="1"/>
</dbReference>
<dbReference type="Pfam" id="PF00104">
    <property type="entry name" value="Hormone_recep"/>
    <property type="match status" value="1"/>
</dbReference>
<dbReference type="Pfam" id="PF00105">
    <property type="entry name" value="zf-C4"/>
    <property type="match status" value="1"/>
</dbReference>
<dbReference type="PIRSF" id="PIRSF002530">
    <property type="entry name" value="Nuc_orph_FTZ-F1"/>
    <property type="match status" value="1"/>
</dbReference>
<dbReference type="PRINTS" id="PR00398">
    <property type="entry name" value="STRDHORMONER"/>
</dbReference>
<dbReference type="PRINTS" id="PR00047">
    <property type="entry name" value="STROIDFINGER"/>
</dbReference>
<dbReference type="SMART" id="SM00430">
    <property type="entry name" value="HOLI"/>
    <property type="match status" value="1"/>
</dbReference>
<dbReference type="SMART" id="SM00399">
    <property type="entry name" value="ZnF_C4"/>
    <property type="match status" value="1"/>
</dbReference>
<dbReference type="SUPFAM" id="SSF57716">
    <property type="entry name" value="Glucocorticoid receptor-like (DNA-binding domain)"/>
    <property type="match status" value="1"/>
</dbReference>
<dbReference type="SUPFAM" id="SSF48508">
    <property type="entry name" value="Nuclear receptor ligand-binding domain"/>
    <property type="match status" value="1"/>
</dbReference>
<dbReference type="PROSITE" id="PS51843">
    <property type="entry name" value="NR_LBD"/>
    <property type="match status" value="1"/>
</dbReference>
<dbReference type="PROSITE" id="PS00031">
    <property type="entry name" value="NUCLEAR_REC_DBD_1"/>
    <property type="match status" value="1"/>
</dbReference>
<dbReference type="PROSITE" id="PS51030">
    <property type="entry name" value="NUCLEAR_REC_DBD_2"/>
    <property type="match status" value="1"/>
</dbReference>
<protein>
    <recommendedName>
        <fullName>Steroidogenic factor 1</fullName>
        <shortName>SF-1</shortName>
        <shortName>STF-1</shortName>
    </recommendedName>
    <alternativeName>
        <fullName>Nuclear receptor subfamily 5 group A member 1</fullName>
    </alternativeName>
</protein>
<proteinExistence type="evidence at transcript level"/>
<sequence>MDYSYDEDLDELCPVCGDKVSGYHYGLLTCESCKGFFKRTVQNNKHYTCTESQNCKIDKTQRKRCPYCRFQKCLTVGMRLEAVRADRMRGGRNKFGPMYKRDRALKQQKKALIRANGFKLETGPSMGPPPQTDYPLAPALHPGAKGLAPAPPAGPPGDYERGPYGPPGVPMAVPTHGPLAGYLYPAFPGRAIKSEYPEPYASPHEPAPPYGYPEPYPSGPGLPGVPELILKLLQLEPDEGQLKARILACLQEPSKGRPDRPTPFGLMCKMADQTLFSIVEWARSCVVFKELEVADQMKLLQNCWSELLVFDHIYRQIQHGKEGSILLVTGQEVDLSTVAAQAGSLLHSLVLRAQDLVQQLHSLQVDRQEFVCLKFLILFSLDVKFLENHGLAKDAQEKANSALLEYTMCHYPHCGDKFRQLLLRLAEVRSLSMQAEEYLYHKHLGGEVPCNNLLIEMLHAKRT</sequence>
<gene>
    <name type="primary">NR5A1</name>
    <name type="synonym">SF1</name>
</gene>
<evidence type="ECO:0000250" key="1"/>
<evidence type="ECO:0000250" key="2">
    <source>
        <dbReference type="UniProtKB" id="P33242"/>
    </source>
</evidence>
<evidence type="ECO:0000250" key="3">
    <source>
        <dbReference type="UniProtKB" id="Q13285"/>
    </source>
</evidence>
<evidence type="ECO:0000255" key="4">
    <source>
        <dbReference type="PROSITE-ProRule" id="PRU00407"/>
    </source>
</evidence>
<evidence type="ECO:0000255" key="5">
    <source>
        <dbReference type="PROSITE-ProRule" id="PRU01189"/>
    </source>
</evidence>
<evidence type="ECO:0000256" key="6">
    <source>
        <dbReference type="SAM" id="MobiDB-lite"/>
    </source>
</evidence>
<evidence type="ECO:0000269" key="7">
    <source>
    </source>
</evidence>
<evidence type="ECO:0000305" key="8"/>
<keyword id="KW-0007">Acetylation</keyword>
<keyword id="KW-0010">Activator</keyword>
<keyword id="KW-0238">DNA-binding</keyword>
<keyword id="KW-1017">Isopeptide bond</keyword>
<keyword id="KW-0446">Lipid-binding</keyword>
<keyword id="KW-0479">Metal-binding</keyword>
<keyword id="KW-0539">Nucleus</keyword>
<keyword id="KW-0597">Phosphoprotein</keyword>
<keyword id="KW-0675">Receptor</keyword>
<keyword id="KW-0678">Repressor</keyword>
<keyword id="KW-0804">Transcription</keyword>
<keyword id="KW-0805">Transcription regulation</keyword>
<keyword id="KW-0832">Ubl conjugation</keyword>
<keyword id="KW-0862">Zinc</keyword>
<keyword id="KW-0863">Zinc-finger</keyword>
<name>STF1_NOTEU</name>
<accession>Q95L87</accession>
<reference key="1">
    <citation type="journal article" date="2001" name="Gene">
        <title>Characterization of steroidogenic factor 1 during sexual differentiation in a marsupial.</title>
        <authorList>
            <person name="Whitworth D.J."/>
            <person name="Pask A.J."/>
            <person name="Shaw G."/>
            <person name="Marshall Graves J.A."/>
            <person name="Behringer R.R."/>
            <person name="Renfree M.B."/>
        </authorList>
    </citation>
    <scope>NUCLEOTIDE SEQUENCE [MRNA]</scope>
    <scope>TISSUE SPECIFICITY</scope>
    <scope>DEVELOPMENTAL STAGE</scope>
</reference>
<organism>
    <name type="scientific">Notamacropus eugenii</name>
    <name type="common">Tammar wallaby</name>
    <name type="synonym">Macropus eugenii</name>
    <dbReference type="NCBI Taxonomy" id="9315"/>
    <lineage>
        <taxon>Eukaryota</taxon>
        <taxon>Metazoa</taxon>
        <taxon>Chordata</taxon>
        <taxon>Craniata</taxon>
        <taxon>Vertebrata</taxon>
        <taxon>Euteleostomi</taxon>
        <taxon>Mammalia</taxon>
        <taxon>Metatheria</taxon>
        <taxon>Diprotodontia</taxon>
        <taxon>Macropodidae</taxon>
        <taxon>Notamacropus</taxon>
    </lineage>
</organism>